<proteinExistence type="inferred from homology"/>
<name>Y4109_MYCPA</name>
<protein>
    <recommendedName>
        <fullName evidence="1">UPF0336 protein MAP_4109</fullName>
    </recommendedName>
</protein>
<dbReference type="EMBL" id="AE016958">
    <property type="protein sequence ID" value="AAS06659.1"/>
    <property type="molecule type" value="Genomic_DNA"/>
</dbReference>
<dbReference type="SMR" id="Q73SG5"/>
<dbReference type="STRING" id="262316.MAP_4109"/>
<dbReference type="KEGG" id="mpa:MAP_4109"/>
<dbReference type="eggNOG" id="COG2030">
    <property type="taxonomic scope" value="Bacteria"/>
</dbReference>
<dbReference type="HOGENOM" id="CLU_116276_0_1_11"/>
<dbReference type="Proteomes" id="UP000000580">
    <property type="component" value="Chromosome"/>
</dbReference>
<dbReference type="CDD" id="cd03441">
    <property type="entry name" value="R_hydratase_like"/>
    <property type="match status" value="1"/>
</dbReference>
<dbReference type="Gene3D" id="3.10.129.10">
    <property type="entry name" value="Hotdog Thioesterase"/>
    <property type="match status" value="1"/>
</dbReference>
<dbReference type="HAMAP" id="MF_00799">
    <property type="entry name" value="UPF0336"/>
    <property type="match status" value="1"/>
</dbReference>
<dbReference type="InterPro" id="IPR039569">
    <property type="entry name" value="FAS1-like_DH_region"/>
</dbReference>
<dbReference type="InterPro" id="IPR016709">
    <property type="entry name" value="HadA-like"/>
</dbReference>
<dbReference type="InterPro" id="IPR029069">
    <property type="entry name" value="HotDog_dom_sf"/>
</dbReference>
<dbReference type="NCBIfam" id="NF010244">
    <property type="entry name" value="PRK13691.1"/>
    <property type="match status" value="1"/>
</dbReference>
<dbReference type="Pfam" id="PF13452">
    <property type="entry name" value="FAS1_DH_region"/>
    <property type="match status" value="1"/>
</dbReference>
<dbReference type="PIRSF" id="PIRSF018072">
    <property type="entry name" value="UCP018072"/>
    <property type="match status" value="1"/>
</dbReference>
<dbReference type="SUPFAM" id="SSF54637">
    <property type="entry name" value="Thioesterase/thiol ester dehydrase-isomerase"/>
    <property type="match status" value="1"/>
</dbReference>
<comment type="similarity">
    <text evidence="1">Belongs to the UPF0336 family.</text>
</comment>
<organism>
    <name type="scientific">Mycolicibacterium paratuberculosis (strain ATCC BAA-968 / K-10)</name>
    <name type="common">Mycobacterium paratuberculosis</name>
    <dbReference type="NCBI Taxonomy" id="262316"/>
    <lineage>
        <taxon>Bacteria</taxon>
        <taxon>Bacillati</taxon>
        <taxon>Actinomycetota</taxon>
        <taxon>Actinomycetes</taxon>
        <taxon>Mycobacteriales</taxon>
        <taxon>Mycobacteriaceae</taxon>
        <taxon>Mycobacterium</taxon>
        <taxon>Mycobacterium avium complex (MAC)</taxon>
    </lineage>
</organism>
<accession>Q73SG5</accession>
<reference key="1">
    <citation type="journal article" date="2005" name="Proc. Natl. Acad. Sci. U.S.A.">
        <title>The complete genome sequence of Mycobacterium avium subspecies paratuberculosis.</title>
        <authorList>
            <person name="Li L."/>
            <person name="Bannantine J.P."/>
            <person name="Zhang Q."/>
            <person name="Amonsin A."/>
            <person name="May B.J."/>
            <person name="Alt D."/>
            <person name="Banerji N."/>
            <person name="Kanjilal S."/>
            <person name="Kapur V."/>
        </authorList>
    </citation>
    <scope>NUCLEOTIDE SEQUENCE [LARGE SCALE GENOMIC DNA]</scope>
    <source>
        <strain>ATCC BAA-968 / K-10</strain>
    </source>
</reference>
<gene>
    <name type="ordered locus">MAP_4109</name>
</gene>
<keyword id="KW-1185">Reference proteome</keyword>
<evidence type="ECO:0000255" key="1">
    <source>
        <dbReference type="HAMAP-Rule" id="MF_00799"/>
    </source>
</evidence>
<feature type="chain" id="PRO_0000216141" description="UPF0336 protein MAP_4109">
    <location>
        <begin position="1"/>
        <end position="167"/>
    </location>
</feature>
<feature type="domain" description="MaoC-like">
    <location>
        <begin position="21"/>
        <end position="124"/>
    </location>
</feature>
<sequence length="167" mass="18925">MALKTDIRGMIWRYPDYFVVGREQLRQFALSVKNRHPAHFSEDAAAELGHDAIIAPLTFATIFAKLVQLDFFRHVDIGMETLVIVQVDQRFVFSKPIKAGDKLWARMDIVSVDERFGADIVVTKNICTNDDGELVLEAYTTLMSQFNGDQSAKLRWDSESGQVVRTA</sequence>